<organism>
    <name type="scientific">Arabidopsis thaliana</name>
    <name type="common">Mouse-ear cress</name>
    <dbReference type="NCBI Taxonomy" id="3702"/>
    <lineage>
        <taxon>Eukaryota</taxon>
        <taxon>Viridiplantae</taxon>
        <taxon>Streptophyta</taxon>
        <taxon>Embryophyta</taxon>
        <taxon>Tracheophyta</taxon>
        <taxon>Spermatophyta</taxon>
        <taxon>Magnoliopsida</taxon>
        <taxon>eudicotyledons</taxon>
        <taxon>Gunneridae</taxon>
        <taxon>Pentapetalae</taxon>
        <taxon>rosids</taxon>
        <taxon>malvids</taxon>
        <taxon>Brassicales</taxon>
        <taxon>Brassicaceae</taxon>
        <taxon>Camelineae</taxon>
        <taxon>Arabidopsis</taxon>
    </lineage>
</organism>
<comment type="function">
    <text evidence="2 7">Chaperone involved in the maturation of iron-sulfur [Fe-S] cluster-containing proteins. Has a low intrinsic ATPase activity which is markedly stimulated by HSCB and ISU1 (PubMed:19865480). In cooperation with other chaperones, Hsp70s are key components that facilitate folding of de novo synthesized proteins, assist translocation of precursor proteins into organelles, and are responsible for degradation of damaged protein under stress conditions (Probable).</text>
</comment>
<comment type="subunit">
    <text evidence="2">Interacts with HSCB.</text>
</comment>
<comment type="subcellular location">
    <subcellularLocation>
        <location evidence="2 8">Mitochondrion</location>
    </subcellularLocation>
    <subcellularLocation>
        <location evidence="2">Cytoplasm</location>
        <location evidence="2">Cytosol</location>
    </subcellularLocation>
</comment>
<comment type="similarity">
    <text evidence="7">Belongs to the heat shock protein 70 (TC 1.A.33) family. DnaK subfamily.</text>
</comment>
<comment type="sequence caution" evidence="7">
    <conflict type="erroneous initiation">
        <sequence resource="EMBL-CDS" id="CAB37531"/>
    </conflict>
    <text>Truncated N-terminus.</text>
</comment>
<comment type="sequence caution" evidence="7">
    <conflict type="erroneous initiation">
        <sequence resource="EMBL-CDS" id="CAB80456"/>
    </conflict>
    <text>Truncated N-terminus.</text>
</comment>
<sequence>MASVALLRSFRRREVQMASVSAFKSVSANGKNSMFGKLGYLARPFCSRPVGNDVIGIDLGTTNSCVSVMEGKTARVIENAEGSRTTPSVVAMNQKGELLVGTPAKRQAVTNPTNTIFGSKRLIGRRFDDPQTQKEMKMVPYKIVKAPNGDAWVEANGQKFSPSQIGANVLTKMKETAEAYLGKSINKAVVTVPAYFNDAQRQATKDAGKIAGLDVQRIINEPTAAALSYGMNNKEGVIAVFDLGGGTFDVSILEISSGVFEVKATNGDTFLGGEDFDNTLLEYLVNEFKRSDNIDLTKDNLALQRLREAAEKAKIELSSTTQTEINLPFITADASGAKHLNITLTRSKFEGLVGKLIERTRSPCQNCLKDAGVTIKEVDEVLLVGGMTRVPKVQEIVSEIFGKSPCKGVNPDEAVAMGAAIQGGILRGDVKDLLLLDVVPLSLGIETLGAVFTKLIPRNTTIPTKKSQVFSTAADNQMQVGIKVLQGEREMAADNKVLGEFDLVGIPPAPRGMPQIEVTFDIDANGITTVSAKDKATGKEQNITIRSSGGLSDDEINRMVKEAELNAQKDQEKKQLIDLRNSADTTIYSVEKSLSEYREKIPAEIASEIETAVSDLRTAMAGEDVEDIKAKVEAANKAVSKIGEHMSKGSGSSGSDGSSGEGTSGTEQTPEAEFEEASGSRK</sequence>
<evidence type="ECO:0000256" key="1">
    <source>
        <dbReference type="SAM" id="MobiDB-lite"/>
    </source>
</evidence>
<evidence type="ECO:0000269" key="2">
    <source>
    </source>
</evidence>
<evidence type="ECO:0000269" key="3">
    <source>
    </source>
</evidence>
<evidence type="ECO:0000303" key="4">
    <source>
    </source>
</evidence>
<evidence type="ECO:0000303" key="5">
    <source>
    </source>
</evidence>
<evidence type="ECO:0000303" key="6">
    <source>
    </source>
</evidence>
<evidence type="ECO:0000305" key="7"/>
<evidence type="ECO:0000305" key="8">
    <source>
    </source>
</evidence>
<evidence type="ECO:0000312" key="9">
    <source>
        <dbReference type="Araport" id="AT4G37910"/>
    </source>
</evidence>
<evidence type="ECO:0000312" key="10">
    <source>
        <dbReference type="EMBL" id="CAB37531.1"/>
    </source>
</evidence>
<name>HSP7I_ARATH</name>
<gene>
    <name evidence="5" type="primary">HSP70-9</name>
    <name evidence="6" type="synonym">HSCA1</name>
    <name evidence="4" type="synonym">MTHSC70-1</name>
    <name evidence="9" type="ordered locus">At4g37910</name>
    <name evidence="10" type="ORF">F20D10.30</name>
</gene>
<dbReference type="EMBL" id="AL035538">
    <property type="protein sequence ID" value="CAB37531.1"/>
    <property type="status" value="ALT_INIT"/>
    <property type="molecule type" value="Genomic_DNA"/>
</dbReference>
<dbReference type="EMBL" id="AL161592">
    <property type="protein sequence ID" value="CAB80456.1"/>
    <property type="status" value="ALT_INIT"/>
    <property type="molecule type" value="Genomic_DNA"/>
</dbReference>
<dbReference type="EMBL" id="CP002687">
    <property type="protein sequence ID" value="AEE86852.1"/>
    <property type="molecule type" value="Genomic_DNA"/>
</dbReference>
<dbReference type="EMBL" id="CP002687">
    <property type="protein sequence ID" value="ANM66081.1"/>
    <property type="molecule type" value="Genomic_DNA"/>
</dbReference>
<dbReference type="EMBL" id="BT002390">
    <property type="protein sequence ID" value="AAO00750.1"/>
    <property type="molecule type" value="mRNA"/>
</dbReference>
<dbReference type="EMBL" id="BT008430">
    <property type="protein sequence ID" value="AAP37789.1"/>
    <property type="molecule type" value="mRNA"/>
</dbReference>
<dbReference type="EMBL" id="AK221937">
    <property type="protein sequence ID" value="BAD94381.1"/>
    <property type="molecule type" value="mRNA"/>
</dbReference>
<dbReference type="PIR" id="T05618">
    <property type="entry name" value="T05618"/>
</dbReference>
<dbReference type="RefSeq" id="NP_001328002.1">
    <property type="nucleotide sequence ID" value="NM_001342461.1"/>
</dbReference>
<dbReference type="RefSeq" id="NP_195504.2">
    <property type="nucleotide sequence ID" value="NM_119952.4"/>
</dbReference>
<dbReference type="SMR" id="Q8GUM2"/>
<dbReference type="BioGRID" id="15228">
    <property type="interactions" value="3"/>
</dbReference>
<dbReference type="FunCoup" id="Q8GUM2">
    <property type="interactions" value="3083"/>
</dbReference>
<dbReference type="IntAct" id="Q8GUM2">
    <property type="interactions" value="1"/>
</dbReference>
<dbReference type="MINT" id="Q8GUM2"/>
<dbReference type="STRING" id="3702.Q8GUM2"/>
<dbReference type="iPTMnet" id="Q8GUM2"/>
<dbReference type="MetOSite" id="Q8GUM2"/>
<dbReference type="SwissPalm" id="Q8GUM2"/>
<dbReference type="PaxDb" id="3702-AT4G37910.1"/>
<dbReference type="ProteomicsDB" id="232119"/>
<dbReference type="EnsemblPlants" id="AT4G37910.1">
    <property type="protein sequence ID" value="AT4G37910.1"/>
    <property type="gene ID" value="AT4G37910"/>
</dbReference>
<dbReference type="EnsemblPlants" id="AT4G37910.2">
    <property type="protein sequence ID" value="AT4G37910.2"/>
    <property type="gene ID" value="AT4G37910"/>
</dbReference>
<dbReference type="GeneID" id="829947"/>
<dbReference type="Gramene" id="AT4G37910.1">
    <property type="protein sequence ID" value="AT4G37910.1"/>
    <property type="gene ID" value="AT4G37910"/>
</dbReference>
<dbReference type="Gramene" id="AT4G37910.2">
    <property type="protein sequence ID" value="AT4G37910.2"/>
    <property type="gene ID" value="AT4G37910"/>
</dbReference>
<dbReference type="KEGG" id="ath:AT4G37910"/>
<dbReference type="Araport" id="AT4G37910"/>
<dbReference type="TAIR" id="AT4G37910">
    <property type="gene designation" value="MTHSC70-1"/>
</dbReference>
<dbReference type="eggNOG" id="KOG0102">
    <property type="taxonomic scope" value="Eukaryota"/>
</dbReference>
<dbReference type="HOGENOM" id="CLU_005965_2_1_1"/>
<dbReference type="InParanoid" id="Q8GUM2"/>
<dbReference type="OMA" id="MSWATTH"/>
<dbReference type="OrthoDB" id="2401965at2759"/>
<dbReference type="PhylomeDB" id="Q8GUM2"/>
<dbReference type="CD-CODE" id="4299E36E">
    <property type="entry name" value="Nucleolus"/>
</dbReference>
<dbReference type="PRO" id="PR:Q8GUM2"/>
<dbReference type="Proteomes" id="UP000006548">
    <property type="component" value="Chromosome 4"/>
</dbReference>
<dbReference type="ExpressionAtlas" id="Q8GUM2">
    <property type="expression patterns" value="baseline and differential"/>
</dbReference>
<dbReference type="GO" id="GO:0005829">
    <property type="term" value="C:cytosol"/>
    <property type="evidence" value="ECO:0007005"/>
    <property type="project" value="TAIR"/>
</dbReference>
<dbReference type="GO" id="GO:0005739">
    <property type="term" value="C:mitochondrion"/>
    <property type="evidence" value="ECO:0007005"/>
    <property type="project" value="TAIR"/>
</dbReference>
<dbReference type="GO" id="GO:0009505">
    <property type="term" value="C:plant-type cell wall"/>
    <property type="evidence" value="ECO:0007005"/>
    <property type="project" value="TAIR"/>
</dbReference>
<dbReference type="GO" id="GO:0000325">
    <property type="term" value="C:plant-type vacuole"/>
    <property type="evidence" value="ECO:0007005"/>
    <property type="project" value="TAIR"/>
</dbReference>
<dbReference type="GO" id="GO:0005886">
    <property type="term" value="C:plasma membrane"/>
    <property type="evidence" value="ECO:0007005"/>
    <property type="project" value="TAIR"/>
</dbReference>
<dbReference type="GO" id="GO:0005524">
    <property type="term" value="F:ATP binding"/>
    <property type="evidence" value="ECO:0007005"/>
    <property type="project" value="TAIR"/>
</dbReference>
<dbReference type="GO" id="GO:0140662">
    <property type="term" value="F:ATP-dependent protein folding chaperone"/>
    <property type="evidence" value="ECO:0007669"/>
    <property type="project" value="InterPro"/>
</dbReference>
<dbReference type="GO" id="GO:0051082">
    <property type="term" value="F:unfolded protein binding"/>
    <property type="evidence" value="ECO:0007669"/>
    <property type="project" value="InterPro"/>
</dbReference>
<dbReference type="GO" id="GO:0008270">
    <property type="term" value="F:zinc ion binding"/>
    <property type="evidence" value="ECO:0007005"/>
    <property type="project" value="TAIR"/>
</dbReference>
<dbReference type="CDD" id="cd11733">
    <property type="entry name" value="ASKHA_NBD_HSP70_HSPA9"/>
    <property type="match status" value="1"/>
</dbReference>
<dbReference type="FunFam" id="2.60.34.10:FF:000014">
    <property type="entry name" value="Chaperone protein DnaK HSP70"/>
    <property type="match status" value="1"/>
</dbReference>
<dbReference type="FunFam" id="3.30.420.40:FF:000020">
    <property type="entry name" value="Chaperone protein HscA homolog"/>
    <property type="match status" value="1"/>
</dbReference>
<dbReference type="FunFam" id="1.20.1270.10:FF:000001">
    <property type="entry name" value="Molecular chaperone DnaK"/>
    <property type="match status" value="1"/>
</dbReference>
<dbReference type="FunFam" id="3.30.420.40:FF:000004">
    <property type="entry name" value="Molecular chaperone DnaK"/>
    <property type="match status" value="1"/>
</dbReference>
<dbReference type="FunFam" id="3.90.640.10:FF:000003">
    <property type="entry name" value="Molecular chaperone DnaK"/>
    <property type="match status" value="1"/>
</dbReference>
<dbReference type="Gene3D" id="1.20.1270.10">
    <property type="match status" value="1"/>
</dbReference>
<dbReference type="Gene3D" id="3.30.420.40">
    <property type="match status" value="2"/>
</dbReference>
<dbReference type="Gene3D" id="3.90.640.10">
    <property type="entry name" value="Actin, Chain A, domain 4"/>
    <property type="match status" value="1"/>
</dbReference>
<dbReference type="Gene3D" id="2.60.34.10">
    <property type="entry name" value="Substrate Binding Domain Of DNAk, Chain A, domain 1"/>
    <property type="match status" value="1"/>
</dbReference>
<dbReference type="HAMAP" id="MF_00332">
    <property type="entry name" value="DnaK"/>
    <property type="match status" value="1"/>
</dbReference>
<dbReference type="InterPro" id="IPR043129">
    <property type="entry name" value="ATPase_NBD"/>
</dbReference>
<dbReference type="InterPro" id="IPR012725">
    <property type="entry name" value="Chaperone_DnaK"/>
</dbReference>
<dbReference type="InterPro" id="IPR018181">
    <property type="entry name" value="Heat_shock_70_CS"/>
</dbReference>
<dbReference type="InterPro" id="IPR029048">
    <property type="entry name" value="HSP70_C_sf"/>
</dbReference>
<dbReference type="InterPro" id="IPR029047">
    <property type="entry name" value="HSP70_peptide-bd_sf"/>
</dbReference>
<dbReference type="InterPro" id="IPR013126">
    <property type="entry name" value="Hsp_70_fam"/>
</dbReference>
<dbReference type="NCBIfam" id="NF001413">
    <property type="entry name" value="PRK00290.1"/>
    <property type="match status" value="1"/>
</dbReference>
<dbReference type="NCBIfam" id="TIGR02350">
    <property type="entry name" value="prok_dnaK"/>
    <property type="match status" value="1"/>
</dbReference>
<dbReference type="PANTHER" id="PTHR19375">
    <property type="entry name" value="HEAT SHOCK PROTEIN 70KDA"/>
    <property type="match status" value="1"/>
</dbReference>
<dbReference type="Pfam" id="PF00012">
    <property type="entry name" value="HSP70"/>
    <property type="match status" value="1"/>
</dbReference>
<dbReference type="PRINTS" id="PR00301">
    <property type="entry name" value="HEATSHOCK70"/>
</dbReference>
<dbReference type="SUPFAM" id="SSF53067">
    <property type="entry name" value="Actin-like ATPase domain"/>
    <property type="match status" value="2"/>
</dbReference>
<dbReference type="SUPFAM" id="SSF100920">
    <property type="entry name" value="Heat shock protein 70kD (HSP70), peptide-binding domain"/>
    <property type="match status" value="1"/>
</dbReference>
<dbReference type="PROSITE" id="PS00297">
    <property type="entry name" value="HSP70_1"/>
    <property type="match status" value="1"/>
</dbReference>
<dbReference type="PROSITE" id="PS00329">
    <property type="entry name" value="HSP70_2"/>
    <property type="match status" value="1"/>
</dbReference>
<dbReference type="PROSITE" id="PS01036">
    <property type="entry name" value="HSP70_3"/>
    <property type="match status" value="1"/>
</dbReference>
<protein>
    <recommendedName>
        <fullName evidence="7">Heat shock 70 kDa protein 9, mitochondrial</fullName>
    </recommendedName>
    <alternativeName>
        <fullName evidence="6">Chaperone protein HscA homolog 1</fullName>
        <shortName evidence="6">AtHscA1</shortName>
    </alternativeName>
    <alternativeName>
        <fullName evidence="5">Heat shock protein 70-9</fullName>
        <shortName evidence="5">AtHsp70-9</shortName>
    </alternativeName>
    <alternativeName>
        <fullName evidence="4">Mitochondrial heat shock protein 70-1</fullName>
        <shortName evidence="4">mtHsc70-1</shortName>
    </alternativeName>
</protein>
<feature type="transit peptide" description="Mitochondrion" evidence="3">
    <location>
        <begin position="1"/>
        <end position="46"/>
    </location>
</feature>
<feature type="chain" id="PRO_0000415428" description="Heat shock 70 kDa protein 9, mitochondrial">
    <location>
        <begin position="47"/>
        <end position="682"/>
    </location>
</feature>
<feature type="region of interest" description="Disordered" evidence="1">
    <location>
        <begin position="640"/>
        <end position="682"/>
    </location>
</feature>
<feature type="compositionally biased region" description="Gly residues" evidence="1">
    <location>
        <begin position="651"/>
        <end position="663"/>
    </location>
</feature>
<feature type="sequence conflict" description="In Ref. 4; BAD94381." evidence="7" ref="4">
    <original>A</original>
    <variation>V</variation>
    <location>
        <position position="414"/>
    </location>
</feature>
<reference key="1">
    <citation type="journal article" date="1999" name="Nature">
        <title>Sequence and analysis of chromosome 4 of the plant Arabidopsis thaliana.</title>
        <authorList>
            <person name="Mayer K.F.X."/>
            <person name="Schueller C."/>
            <person name="Wambutt R."/>
            <person name="Murphy G."/>
            <person name="Volckaert G."/>
            <person name="Pohl T."/>
            <person name="Duesterhoeft A."/>
            <person name="Stiekema W."/>
            <person name="Entian K.-D."/>
            <person name="Terryn N."/>
            <person name="Harris B."/>
            <person name="Ansorge W."/>
            <person name="Brandt P."/>
            <person name="Grivell L.A."/>
            <person name="Rieger M."/>
            <person name="Weichselgartner M."/>
            <person name="de Simone V."/>
            <person name="Obermaier B."/>
            <person name="Mache R."/>
            <person name="Mueller M."/>
            <person name="Kreis M."/>
            <person name="Delseny M."/>
            <person name="Puigdomenech P."/>
            <person name="Watson M."/>
            <person name="Schmidtheini T."/>
            <person name="Reichert B."/>
            <person name="Portetelle D."/>
            <person name="Perez-Alonso M."/>
            <person name="Boutry M."/>
            <person name="Bancroft I."/>
            <person name="Vos P."/>
            <person name="Hoheisel J."/>
            <person name="Zimmermann W."/>
            <person name="Wedler H."/>
            <person name="Ridley P."/>
            <person name="Langham S.-A."/>
            <person name="McCullagh B."/>
            <person name="Bilham L."/>
            <person name="Robben J."/>
            <person name="van der Schueren J."/>
            <person name="Grymonprez B."/>
            <person name="Chuang Y.-J."/>
            <person name="Vandenbussche F."/>
            <person name="Braeken M."/>
            <person name="Weltjens I."/>
            <person name="Voet M."/>
            <person name="Bastiaens I."/>
            <person name="Aert R."/>
            <person name="Defoor E."/>
            <person name="Weitzenegger T."/>
            <person name="Bothe G."/>
            <person name="Ramsperger U."/>
            <person name="Hilbert H."/>
            <person name="Braun M."/>
            <person name="Holzer E."/>
            <person name="Brandt A."/>
            <person name="Peters S."/>
            <person name="van Staveren M."/>
            <person name="Dirkse W."/>
            <person name="Mooijman P."/>
            <person name="Klein Lankhorst R."/>
            <person name="Rose M."/>
            <person name="Hauf J."/>
            <person name="Koetter P."/>
            <person name="Berneiser S."/>
            <person name="Hempel S."/>
            <person name="Feldpausch M."/>
            <person name="Lamberth S."/>
            <person name="Van den Daele H."/>
            <person name="De Keyser A."/>
            <person name="Buysshaert C."/>
            <person name="Gielen J."/>
            <person name="Villarroel R."/>
            <person name="De Clercq R."/>
            <person name="van Montagu M."/>
            <person name="Rogers J."/>
            <person name="Cronin A."/>
            <person name="Quail M.A."/>
            <person name="Bray-Allen S."/>
            <person name="Clark L."/>
            <person name="Doggett J."/>
            <person name="Hall S."/>
            <person name="Kay M."/>
            <person name="Lennard N."/>
            <person name="McLay K."/>
            <person name="Mayes R."/>
            <person name="Pettett A."/>
            <person name="Rajandream M.A."/>
            <person name="Lyne M."/>
            <person name="Benes V."/>
            <person name="Rechmann S."/>
            <person name="Borkova D."/>
            <person name="Bloecker H."/>
            <person name="Scharfe M."/>
            <person name="Grimm M."/>
            <person name="Loehnert T.-H."/>
            <person name="Dose S."/>
            <person name="de Haan M."/>
            <person name="Maarse A.C."/>
            <person name="Schaefer M."/>
            <person name="Mueller-Auer S."/>
            <person name="Gabel C."/>
            <person name="Fuchs M."/>
            <person name="Fartmann B."/>
            <person name="Granderath K."/>
            <person name="Dauner D."/>
            <person name="Herzl A."/>
            <person name="Neumann S."/>
            <person name="Argiriou A."/>
            <person name="Vitale D."/>
            <person name="Liguori R."/>
            <person name="Piravandi E."/>
            <person name="Massenet O."/>
            <person name="Quigley F."/>
            <person name="Clabauld G."/>
            <person name="Muendlein A."/>
            <person name="Felber R."/>
            <person name="Schnabl S."/>
            <person name="Hiller R."/>
            <person name="Schmidt W."/>
            <person name="Lecharny A."/>
            <person name="Aubourg S."/>
            <person name="Chefdor F."/>
            <person name="Cooke R."/>
            <person name="Berger C."/>
            <person name="Monfort A."/>
            <person name="Casacuberta E."/>
            <person name="Gibbons T."/>
            <person name="Weber N."/>
            <person name="Vandenbol M."/>
            <person name="Bargues M."/>
            <person name="Terol J."/>
            <person name="Torres A."/>
            <person name="Perez-Perez A."/>
            <person name="Purnelle B."/>
            <person name="Bent E."/>
            <person name="Johnson S."/>
            <person name="Tacon D."/>
            <person name="Jesse T."/>
            <person name="Heijnen L."/>
            <person name="Schwarz S."/>
            <person name="Scholler P."/>
            <person name="Heber S."/>
            <person name="Francs P."/>
            <person name="Bielke C."/>
            <person name="Frishman D."/>
            <person name="Haase D."/>
            <person name="Lemcke K."/>
            <person name="Mewes H.-W."/>
            <person name="Stocker S."/>
            <person name="Zaccaria P."/>
            <person name="Bevan M."/>
            <person name="Wilson R.K."/>
            <person name="de la Bastide M."/>
            <person name="Habermann K."/>
            <person name="Parnell L."/>
            <person name="Dedhia N."/>
            <person name="Gnoj L."/>
            <person name="Schutz K."/>
            <person name="Huang E."/>
            <person name="Spiegel L."/>
            <person name="Sekhon M."/>
            <person name="Murray J."/>
            <person name="Sheet P."/>
            <person name="Cordes M."/>
            <person name="Abu-Threideh J."/>
            <person name="Stoneking T."/>
            <person name="Kalicki J."/>
            <person name="Graves T."/>
            <person name="Harmon G."/>
            <person name="Edwards J."/>
            <person name="Latreille P."/>
            <person name="Courtney L."/>
            <person name="Cloud J."/>
            <person name="Abbott A."/>
            <person name="Scott K."/>
            <person name="Johnson D."/>
            <person name="Minx P."/>
            <person name="Bentley D."/>
            <person name="Fulton B."/>
            <person name="Miller N."/>
            <person name="Greco T."/>
            <person name="Kemp K."/>
            <person name="Kramer J."/>
            <person name="Fulton L."/>
            <person name="Mardis E."/>
            <person name="Dante M."/>
            <person name="Pepin K."/>
            <person name="Hillier L.W."/>
            <person name="Nelson J."/>
            <person name="Spieth J."/>
            <person name="Ryan E."/>
            <person name="Andrews S."/>
            <person name="Geisel C."/>
            <person name="Layman D."/>
            <person name="Du H."/>
            <person name="Ali J."/>
            <person name="Berghoff A."/>
            <person name="Jones K."/>
            <person name="Drone K."/>
            <person name="Cotton M."/>
            <person name="Joshu C."/>
            <person name="Antonoiu B."/>
            <person name="Zidanic M."/>
            <person name="Strong C."/>
            <person name="Sun H."/>
            <person name="Lamar B."/>
            <person name="Yordan C."/>
            <person name="Ma P."/>
            <person name="Zhong J."/>
            <person name="Preston R."/>
            <person name="Vil D."/>
            <person name="Shekher M."/>
            <person name="Matero A."/>
            <person name="Shah R."/>
            <person name="Swaby I.K."/>
            <person name="O'Shaughnessy A."/>
            <person name="Rodriguez M."/>
            <person name="Hoffman J."/>
            <person name="Till S."/>
            <person name="Granat S."/>
            <person name="Shohdy N."/>
            <person name="Hasegawa A."/>
            <person name="Hameed A."/>
            <person name="Lodhi M."/>
            <person name="Johnson A."/>
            <person name="Chen E."/>
            <person name="Marra M.A."/>
            <person name="Martienssen R."/>
            <person name="McCombie W.R."/>
        </authorList>
    </citation>
    <scope>NUCLEOTIDE SEQUENCE [LARGE SCALE GENOMIC DNA]</scope>
    <source>
        <strain>cv. Columbia</strain>
    </source>
</reference>
<reference key="2">
    <citation type="journal article" date="2017" name="Plant J.">
        <title>Araport11: a complete reannotation of the Arabidopsis thaliana reference genome.</title>
        <authorList>
            <person name="Cheng C.Y."/>
            <person name="Krishnakumar V."/>
            <person name="Chan A.P."/>
            <person name="Thibaud-Nissen F."/>
            <person name="Schobel S."/>
            <person name="Town C.D."/>
        </authorList>
    </citation>
    <scope>GENOME REANNOTATION</scope>
    <source>
        <strain>cv. Columbia</strain>
    </source>
</reference>
<reference key="3">
    <citation type="journal article" date="2003" name="Science">
        <title>Empirical analysis of transcriptional activity in the Arabidopsis genome.</title>
        <authorList>
            <person name="Yamada K."/>
            <person name="Lim J."/>
            <person name="Dale J.M."/>
            <person name="Chen H."/>
            <person name="Shinn P."/>
            <person name="Palm C.J."/>
            <person name="Southwick A.M."/>
            <person name="Wu H.C."/>
            <person name="Kim C.J."/>
            <person name="Nguyen M."/>
            <person name="Pham P.K."/>
            <person name="Cheuk R.F."/>
            <person name="Karlin-Newmann G."/>
            <person name="Liu S.X."/>
            <person name="Lam B."/>
            <person name="Sakano H."/>
            <person name="Wu T."/>
            <person name="Yu G."/>
            <person name="Miranda M."/>
            <person name="Quach H.L."/>
            <person name="Tripp M."/>
            <person name="Chang C.H."/>
            <person name="Lee J.M."/>
            <person name="Toriumi M.J."/>
            <person name="Chan M.M."/>
            <person name="Tang C.C."/>
            <person name="Onodera C.S."/>
            <person name="Deng J.M."/>
            <person name="Akiyama K."/>
            <person name="Ansari Y."/>
            <person name="Arakawa T."/>
            <person name="Banh J."/>
            <person name="Banno F."/>
            <person name="Bowser L."/>
            <person name="Brooks S.Y."/>
            <person name="Carninci P."/>
            <person name="Chao Q."/>
            <person name="Choy N."/>
            <person name="Enju A."/>
            <person name="Goldsmith A.D."/>
            <person name="Gurjal M."/>
            <person name="Hansen N.F."/>
            <person name="Hayashizaki Y."/>
            <person name="Johnson-Hopson C."/>
            <person name="Hsuan V.W."/>
            <person name="Iida K."/>
            <person name="Karnes M."/>
            <person name="Khan S."/>
            <person name="Koesema E."/>
            <person name="Ishida J."/>
            <person name="Jiang P.X."/>
            <person name="Jones T."/>
            <person name="Kawai J."/>
            <person name="Kamiya A."/>
            <person name="Meyers C."/>
            <person name="Nakajima M."/>
            <person name="Narusaka M."/>
            <person name="Seki M."/>
            <person name="Sakurai T."/>
            <person name="Satou M."/>
            <person name="Tamse R."/>
            <person name="Vaysberg M."/>
            <person name="Wallender E.K."/>
            <person name="Wong C."/>
            <person name="Yamamura Y."/>
            <person name="Yuan S."/>
            <person name="Shinozaki K."/>
            <person name="Davis R.W."/>
            <person name="Theologis A."/>
            <person name="Ecker J.R."/>
        </authorList>
    </citation>
    <scope>NUCLEOTIDE SEQUENCE [LARGE SCALE MRNA]</scope>
    <source>
        <strain>cv. Columbia</strain>
    </source>
</reference>
<reference key="4">
    <citation type="submission" date="2005-03" db="EMBL/GenBank/DDBJ databases">
        <title>Large-scale analysis of RIKEN Arabidopsis full-length (RAFL) cDNAs.</title>
        <authorList>
            <person name="Totoki Y."/>
            <person name="Seki M."/>
            <person name="Ishida J."/>
            <person name="Nakajima M."/>
            <person name="Enju A."/>
            <person name="Kamiya A."/>
            <person name="Narusaka M."/>
            <person name="Shin-i T."/>
            <person name="Nakagawa M."/>
            <person name="Sakamoto N."/>
            <person name="Oishi K."/>
            <person name="Kohara Y."/>
            <person name="Kobayashi M."/>
            <person name="Toyoda A."/>
            <person name="Sakaki Y."/>
            <person name="Sakurai T."/>
            <person name="Iida K."/>
            <person name="Akiyama K."/>
            <person name="Satou M."/>
            <person name="Toyoda T."/>
            <person name="Konagaya A."/>
            <person name="Carninci P."/>
            <person name="Kawai J."/>
            <person name="Hayashizaki Y."/>
            <person name="Shinozaki K."/>
        </authorList>
    </citation>
    <scope>NUCLEOTIDE SEQUENCE [LARGE SCALE MRNA] OF 345-682</scope>
    <source>
        <strain>cv. Columbia</strain>
    </source>
</reference>
<reference key="5">
    <citation type="journal article" date="2001" name="Cell Stress Chaperones">
        <title>Genomic analysis of the Hsp70 superfamily in Arabidopsis thaliana.</title>
        <authorList>
            <person name="Lin B.L."/>
            <person name="Wang J.S."/>
            <person name="Liu H.C."/>
            <person name="Chen R.W."/>
            <person name="Meyer Y."/>
            <person name="Barakat A."/>
            <person name="Delseny M."/>
        </authorList>
    </citation>
    <scope>GENE FAMILY</scope>
    <scope>NOMENCLATURE</scope>
</reference>
<reference key="6">
    <citation type="journal article" date="2001" name="Plant Physiol.">
        <title>Comprehensive expression profile analysis of the Arabidopsis Hsp70 gene family.</title>
        <authorList>
            <person name="Sung D.Y."/>
            <person name="Vierling E."/>
            <person name="Guy C.L."/>
        </authorList>
    </citation>
    <scope>DNAK GENE SUBFAMILY</scope>
</reference>
<reference key="7">
    <citation type="journal article" date="2009" name="PLoS ONE">
        <title>Dual localized AtHscB involved in iron sulfur protein biogenesis in Arabidopsis.</title>
        <authorList>
            <person name="Xu X.M."/>
            <person name="Lin H."/>
            <person name="Latijnhouwers M."/>
            <person name="Moeller S.G."/>
        </authorList>
    </citation>
    <scope>FUNCTION</scope>
    <scope>INTERACTION WITH HSCB</scope>
    <scope>SUBCELLULAR LOCATION</scope>
</reference>
<reference key="8">
    <citation type="journal article" date="2015" name="J. Exp. Bot.">
        <title>Identification of cleavage sites and substrate proteins for two mitochondrial intermediate peptidases in Arabidopsis thaliana.</title>
        <authorList>
            <person name="Carrie C."/>
            <person name="Venne A.S."/>
            <person name="Zahedi R.P."/>
            <person name="Soll J."/>
        </authorList>
    </citation>
    <scope>IDENTIFICATION BY MASS SPECTROMETRY</scope>
    <scope>CLEAVAGE OF TRANSIT PEPTIDE AFTER CYS-46</scope>
</reference>
<keyword id="KW-0067">ATP-binding</keyword>
<keyword id="KW-0143">Chaperone</keyword>
<keyword id="KW-0963">Cytoplasm</keyword>
<keyword id="KW-0496">Mitochondrion</keyword>
<keyword id="KW-0547">Nucleotide-binding</keyword>
<keyword id="KW-1185">Reference proteome</keyword>
<keyword id="KW-0346">Stress response</keyword>
<keyword id="KW-0809">Transit peptide</keyword>
<proteinExistence type="evidence at protein level"/>
<accession>Q8GUM2</accession>
<accession>Q56WU4</accession>
<accession>Q9SZJ3</accession>